<protein>
    <recommendedName>
        <fullName>U7-theraphotoxin-Hhn1a 8</fullName>
        <shortName>U7-TRTX-Hhn1a</shortName>
    </recommendedName>
    <alternativeName>
        <fullName>Hainantoxin-XIII.8</fullName>
        <shortName>HNTX-XIII.8</shortName>
    </alternativeName>
</protein>
<name>H13A8_CYRHA</name>
<evidence type="ECO:0000250" key="1"/>
<evidence type="ECO:0000255" key="2"/>
<evidence type="ECO:0000305" key="3"/>
<proteinExistence type="evidence at transcript level"/>
<feature type="signal peptide" evidence="2">
    <location>
        <begin position="1"/>
        <end position="19"/>
    </location>
</feature>
<feature type="propeptide" id="PRO_0000400693" evidence="1">
    <location>
        <begin position="20"/>
        <end position="50"/>
    </location>
</feature>
<feature type="peptide" id="PRO_0000400694" description="U7-theraphotoxin-Hhn1a 8">
    <location>
        <begin position="51"/>
        <end position="90"/>
    </location>
</feature>
<feature type="disulfide bond" evidence="1">
    <location>
        <begin position="51"/>
        <end position="65"/>
    </location>
</feature>
<feature type="disulfide bond" evidence="1">
    <location>
        <begin position="58"/>
        <end position="70"/>
    </location>
</feature>
<feature type="disulfide bond" evidence="1">
    <location>
        <begin position="64"/>
        <end position="81"/>
    </location>
</feature>
<sequence>MKTAIFTVVLALAVFAVLSFGWEANEKALSEEFTELIHEKGAASETEARECRYFWGECHDHMPCCDWLVCRYKWPITYNICVWNRTFPEK</sequence>
<comment type="function">
    <text evidence="1">Ion channel inhibitor.</text>
</comment>
<comment type="subcellular location">
    <subcellularLocation>
        <location evidence="1">Secreted</location>
    </subcellularLocation>
</comment>
<comment type="tissue specificity">
    <text>Expressed by the venom gland.</text>
</comment>
<comment type="domain">
    <text evidence="1">The presence of a 'disulfide through disulfide knot' structurally defines this protein as a knottin.</text>
</comment>
<comment type="similarity">
    <text evidence="3">Belongs to the neurotoxin 10 (Hwtx-1) family. 13 (Hntx-13) subfamily.</text>
</comment>
<reference key="1">
    <citation type="journal article" date="2010" name="J. Proteome Res.">
        <title>Molecular diversification of peptide toxins from the tarantula Haplopelma hainanum (Ornithoctonus hainana) venom based on transcriptomic, peptidomic, and genomic analyses.</title>
        <authorList>
            <person name="Tang X."/>
            <person name="Zhang Y."/>
            <person name="Hu W."/>
            <person name="Xu D."/>
            <person name="Tao H."/>
            <person name="Yang X."/>
            <person name="Li Y."/>
            <person name="Jiang L."/>
            <person name="Liang S."/>
        </authorList>
    </citation>
    <scope>NUCLEOTIDE SEQUENCE [LARGE SCALE MRNA]</scope>
    <source>
        <tissue>Venom gland</tissue>
    </source>
</reference>
<organism>
    <name type="scientific">Cyriopagopus hainanus</name>
    <name type="common">Chinese bird spider</name>
    <name type="synonym">Haplopelma hainanum</name>
    <dbReference type="NCBI Taxonomy" id="209901"/>
    <lineage>
        <taxon>Eukaryota</taxon>
        <taxon>Metazoa</taxon>
        <taxon>Ecdysozoa</taxon>
        <taxon>Arthropoda</taxon>
        <taxon>Chelicerata</taxon>
        <taxon>Arachnida</taxon>
        <taxon>Araneae</taxon>
        <taxon>Mygalomorphae</taxon>
        <taxon>Theraphosidae</taxon>
        <taxon>Haplopelma</taxon>
    </lineage>
</organism>
<accession>D2Y2H5</accession>
<keyword id="KW-1015">Disulfide bond</keyword>
<keyword id="KW-0872">Ion channel impairing toxin</keyword>
<keyword id="KW-0960">Knottin</keyword>
<keyword id="KW-0964">Secreted</keyword>
<keyword id="KW-0732">Signal</keyword>
<keyword id="KW-0800">Toxin</keyword>
<dbReference type="EMBL" id="GU293052">
    <property type="protein sequence ID" value="ADB56868.1"/>
    <property type="molecule type" value="mRNA"/>
</dbReference>
<dbReference type="SMR" id="D2Y2H5"/>
<dbReference type="ArachnoServer" id="AS001986">
    <property type="toxin name" value="U7-theraphotoxin-Hhn1a"/>
</dbReference>
<dbReference type="GO" id="GO:0005576">
    <property type="term" value="C:extracellular region"/>
    <property type="evidence" value="ECO:0007669"/>
    <property type="project" value="UniProtKB-SubCell"/>
</dbReference>
<dbReference type="GO" id="GO:0008200">
    <property type="term" value="F:ion channel inhibitor activity"/>
    <property type="evidence" value="ECO:0007669"/>
    <property type="project" value="InterPro"/>
</dbReference>
<dbReference type="GO" id="GO:0090729">
    <property type="term" value="F:toxin activity"/>
    <property type="evidence" value="ECO:0007669"/>
    <property type="project" value="UniProtKB-KW"/>
</dbReference>
<dbReference type="InterPro" id="IPR011696">
    <property type="entry name" value="Huwentoxin-1"/>
</dbReference>
<dbReference type="Pfam" id="PF07740">
    <property type="entry name" value="Toxin_12"/>
    <property type="match status" value="1"/>
</dbReference>
<dbReference type="SUPFAM" id="SSF57059">
    <property type="entry name" value="omega toxin-like"/>
    <property type="match status" value="1"/>
</dbReference>